<feature type="chain" id="PRO_1000191552" description="Nucleoid-associated protein VSAL_I1059">
    <location>
        <begin position="1"/>
        <end position="338"/>
    </location>
</feature>
<feature type="region of interest" description="Disordered" evidence="2">
    <location>
        <begin position="319"/>
        <end position="338"/>
    </location>
</feature>
<dbReference type="EMBL" id="FM178379">
    <property type="protein sequence ID" value="CAQ78744.1"/>
    <property type="molecule type" value="Genomic_DNA"/>
</dbReference>
<dbReference type="SMR" id="B6EIV0"/>
<dbReference type="KEGG" id="vsa:VSAL_I1059"/>
<dbReference type="eggNOG" id="COG3081">
    <property type="taxonomic scope" value="Bacteria"/>
</dbReference>
<dbReference type="HOGENOM" id="CLU_063050_0_1_6"/>
<dbReference type="Proteomes" id="UP000001730">
    <property type="component" value="Chromosome 1"/>
</dbReference>
<dbReference type="GO" id="GO:0043590">
    <property type="term" value="C:bacterial nucleoid"/>
    <property type="evidence" value="ECO:0007669"/>
    <property type="project" value="TreeGrafter"/>
</dbReference>
<dbReference type="GO" id="GO:0005737">
    <property type="term" value="C:cytoplasm"/>
    <property type="evidence" value="ECO:0007669"/>
    <property type="project" value="UniProtKB-UniRule"/>
</dbReference>
<dbReference type="GO" id="GO:0003690">
    <property type="term" value="F:double-stranded DNA binding"/>
    <property type="evidence" value="ECO:0007669"/>
    <property type="project" value="TreeGrafter"/>
</dbReference>
<dbReference type="GO" id="GO:0003727">
    <property type="term" value="F:single-stranded RNA binding"/>
    <property type="evidence" value="ECO:0007669"/>
    <property type="project" value="TreeGrafter"/>
</dbReference>
<dbReference type="HAMAP" id="MF_00730">
    <property type="entry name" value="NdpA"/>
    <property type="match status" value="1"/>
</dbReference>
<dbReference type="InterPro" id="IPR007358">
    <property type="entry name" value="Nucleoid_associated_NdpA"/>
</dbReference>
<dbReference type="NCBIfam" id="NF001557">
    <property type="entry name" value="PRK00378.1"/>
    <property type="match status" value="1"/>
</dbReference>
<dbReference type="PANTHER" id="PTHR38772">
    <property type="match status" value="1"/>
</dbReference>
<dbReference type="PANTHER" id="PTHR38772:SF1">
    <property type="entry name" value="NUCLEOID-ASSOCIATED PROTEIN YEJK"/>
    <property type="match status" value="1"/>
</dbReference>
<dbReference type="Pfam" id="PF04245">
    <property type="entry name" value="NA37"/>
    <property type="match status" value="1"/>
</dbReference>
<name>NDPA_ALISL</name>
<reference key="1">
    <citation type="journal article" date="2008" name="BMC Genomics">
        <title>The genome sequence of the fish pathogen Aliivibrio salmonicida strain LFI1238 shows extensive evidence of gene decay.</title>
        <authorList>
            <person name="Hjerde E."/>
            <person name="Lorentzen M.S."/>
            <person name="Holden M.T."/>
            <person name="Seeger K."/>
            <person name="Paulsen S."/>
            <person name="Bason N."/>
            <person name="Churcher C."/>
            <person name="Harris D."/>
            <person name="Norbertczak H."/>
            <person name="Quail M.A."/>
            <person name="Sanders S."/>
            <person name="Thurston S."/>
            <person name="Parkhill J."/>
            <person name="Willassen N.P."/>
            <person name="Thomson N.R."/>
        </authorList>
    </citation>
    <scope>NUCLEOTIDE SEQUENCE [LARGE SCALE GENOMIC DNA]</scope>
    <source>
        <strain>LFI1238</strain>
    </source>
</reference>
<evidence type="ECO:0000255" key="1">
    <source>
        <dbReference type="HAMAP-Rule" id="MF_00730"/>
    </source>
</evidence>
<evidence type="ECO:0000256" key="2">
    <source>
        <dbReference type="SAM" id="MobiDB-lite"/>
    </source>
</evidence>
<comment type="subcellular location">
    <subcellularLocation>
        <location evidence="1">Cytoplasm</location>
        <location evidence="1">Nucleoid</location>
    </subcellularLocation>
</comment>
<comment type="similarity">
    <text evidence="1">Belongs to the YejK family.</text>
</comment>
<protein>
    <recommendedName>
        <fullName evidence="1">Nucleoid-associated protein VSAL_I1059</fullName>
    </recommendedName>
</protein>
<keyword id="KW-0963">Cytoplasm</keyword>
<accession>B6EIV0</accession>
<gene>
    <name type="ordered locus">VSAL_I1059</name>
</gene>
<proteinExistence type="inferred from homology"/>
<organism>
    <name type="scientific">Aliivibrio salmonicida (strain LFI1238)</name>
    <name type="common">Vibrio salmonicida (strain LFI1238)</name>
    <dbReference type="NCBI Taxonomy" id="316275"/>
    <lineage>
        <taxon>Bacteria</taxon>
        <taxon>Pseudomonadati</taxon>
        <taxon>Pseudomonadota</taxon>
        <taxon>Gammaproteobacteria</taxon>
        <taxon>Vibrionales</taxon>
        <taxon>Vibrionaceae</taxon>
        <taxon>Aliivibrio</taxon>
    </lineage>
</organism>
<sequence>MSLILSNVILHKLVKNEQDELEVCLRNQLLENEEFTEALVSELHRVFNSKAGKGFGIFKTESEFGHWLGSVRKNETPFLEFSNKSAEKLKSELIKYPFAEEGILVIAEYQSLATEYLFVAVLPSNESMKVTDELNISATDYLDIAKMDIAARIDLSTWETDSDSNRYLTFIKGRVGRKVSDFFLDFLQADVGMDTKVQNQVLMQAVEDFCADERLEKEEKQQYRKQVYDYCNGQLQAGEELTVKELSGELPTSESGSNFYQFAEEQGYELEESFPVDRTALRKLTKFVGAGGGLSLNFDAMLLGERVFYDPETDTLTIKGTPPNLKDQLTRRLGSSES</sequence>